<evidence type="ECO:0000255" key="1">
    <source>
        <dbReference type="HAMAP-Rule" id="MF_00040"/>
    </source>
</evidence>
<feature type="chain" id="PRO_1000074595" description="Ribosome-recycling factor">
    <location>
        <begin position="1"/>
        <end position="185"/>
    </location>
</feature>
<proteinExistence type="inferred from homology"/>
<reference key="1">
    <citation type="submission" date="2007-08" db="EMBL/GenBank/DDBJ databases">
        <title>Complete sequence of Roseiflexus castenholzii DSM 13941.</title>
        <authorList>
            <consortium name="US DOE Joint Genome Institute"/>
            <person name="Copeland A."/>
            <person name="Lucas S."/>
            <person name="Lapidus A."/>
            <person name="Barry K."/>
            <person name="Glavina del Rio T."/>
            <person name="Dalin E."/>
            <person name="Tice H."/>
            <person name="Pitluck S."/>
            <person name="Thompson L.S."/>
            <person name="Brettin T."/>
            <person name="Bruce D."/>
            <person name="Detter J.C."/>
            <person name="Han C."/>
            <person name="Tapia R."/>
            <person name="Schmutz J."/>
            <person name="Larimer F."/>
            <person name="Land M."/>
            <person name="Hauser L."/>
            <person name="Kyrpides N."/>
            <person name="Mikhailova N."/>
            <person name="Bryant D.A."/>
            <person name="Hanada S."/>
            <person name="Tsukatani Y."/>
            <person name="Richardson P."/>
        </authorList>
    </citation>
    <scope>NUCLEOTIDE SEQUENCE [LARGE SCALE GENOMIC DNA]</scope>
    <source>
        <strain>DSM 13941 / HLO8</strain>
    </source>
</reference>
<keyword id="KW-0963">Cytoplasm</keyword>
<keyword id="KW-0648">Protein biosynthesis</keyword>
<keyword id="KW-1185">Reference proteome</keyword>
<comment type="function">
    <text evidence="1">Responsible for the release of ribosomes from messenger RNA at the termination of protein biosynthesis. May increase the efficiency of translation by recycling ribosomes from one round of translation to another.</text>
</comment>
<comment type="subcellular location">
    <subcellularLocation>
        <location evidence="1">Cytoplasm</location>
    </subcellularLocation>
</comment>
<comment type="similarity">
    <text evidence="1">Belongs to the RRF family.</text>
</comment>
<organism>
    <name type="scientific">Roseiflexus castenholzii (strain DSM 13941 / HLO8)</name>
    <dbReference type="NCBI Taxonomy" id="383372"/>
    <lineage>
        <taxon>Bacteria</taxon>
        <taxon>Bacillati</taxon>
        <taxon>Chloroflexota</taxon>
        <taxon>Chloroflexia</taxon>
        <taxon>Chloroflexales</taxon>
        <taxon>Roseiflexineae</taxon>
        <taxon>Roseiflexaceae</taxon>
        <taxon>Roseiflexus</taxon>
    </lineage>
</organism>
<gene>
    <name evidence="1" type="primary">frr</name>
    <name type="ordered locus">Rcas_3928</name>
</gene>
<dbReference type="EMBL" id="CP000804">
    <property type="protein sequence ID" value="ABU59961.1"/>
    <property type="molecule type" value="Genomic_DNA"/>
</dbReference>
<dbReference type="RefSeq" id="WP_012122384.1">
    <property type="nucleotide sequence ID" value="NC_009767.1"/>
</dbReference>
<dbReference type="SMR" id="A7NQW5"/>
<dbReference type="STRING" id="383372.Rcas_3928"/>
<dbReference type="KEGG" id="rca:Rcas_3928"/>
<dbReference type="eggNOG" id="COG0233">
    <property type="taxonomic scope" value="Bacteria"/>
</dbReference>
<dbReference type="HOGENOM" id="CLU_073981_2_0_0"/>
<dbReference type="OrthoDB" id="9804006at2"/>
<dbReference type="Proteomes" id="UP000000263">
    <property type="component" value="Chromosome"/>
</dbReference>
<dbReference type="GO" id="GO:0005737">
    <property type="term" value="C:cytoplasm"/>
    <property type="evidence" value="ECO:0007669"/>
    <property type="project" value="UniProtKB-SubCell"/>
</dbReference>
<dbReference type="GO" id="GO:0043023">
    <property type="term" value="F:ribosomal large subunit binding"/>
    <property type="evidence" value="ECO:0007669"/>
    <property type="project" value="TreeGrafter"/>
</dbReference>
<dbReference type="GO" id="GO:0006415">
    <property type="term" value="P:translational termination"/>
    <property type="evidence" value="ECO:0007669"/>
    <property type="project" value="UniProtKB-UniRule"/>
</dbReference>
<dbReference type="CDD" id="cd00520">
    <property type="entry name" value="RRF"/>
    <property type="match status" value="1"/>
</dbReference>
<dbReference type="FunFam" id="1.10.132.20:FF:000001">
    <property type="entry name" value="Ribosome-recycling factor"/>
    <property type="match status" value="1"/>
</dbReference>
<dbReference type="FunFam" id="3.30.1360.40:FF:000001">
    <property type="entry name" value="Ribosome-recycling factor"/>
    <property type="match status" value="1"/>
</dbReference>
<dbReference type="Gene3D" id="3.30.1360.40">
    <property type="match status" value="1"/>
</dbReference>
<dbReference type="Gene3D" id="1.10.132.20">
    <property type="entry name" value="Ribosome-recycling factor"/>
    <property type="match status" value="1"/>
</dbReference>
<dbReference type="HAMAP" id="MF_00040">
    <property type="entry name" value="RRF"/>
    <property type="match status" value="1"/>
</dbReference>
<dbReference type="InterPro" id="IPR002661">
    <property type="entry name" value="Ribosome_recyc_fac"/>
</dbReference>
<dbReference type="InterPro" id="IPR023584">
    <property type="entry name" value="Ribosome_recyc_fac_dom"/>
</dbReference>
<dbReference type="InterPro" id="IPR036191">
    <property type="entry name" value="RRF_sf"/>
</dbReference>
<dbReference type="NCBIfam" id="TIGR00496">
    <property type="entry name" value="frr"/>
    <property type="match status" value="1"/>
</dbReference>
<dbReference type="PANTHER" id="PTHR20982:SF3">
    <property type="entry name" value="MITOCHONDRIAL RIBOSOME RECYCLING FACTOR PSEUDO 1"/>
    <property type="match status" value="1"/>
</dbReference>
<dbReference type="PANTHER" id="PTHR20982">
    <property type="entry name" value="RIBOSOME RECYCLING FACTOR"/>
    <property type="match status" value="1"/>
</dbReference>
<dbReference type="Pfam" id="PF01765">
    <property type="entry name" value="RRF"/>
    <property type="match status" value="1"/>
</dbReference>
<dbReference type="SUPFAM" id="SSF55194">
    <property type="entry name" value="Ribosome recycling factor, RRF"/>
    <property type="match status" value="1"/>
</dbReference>
<protein>
    <recommendedName>
        <fullName evidence="1">Ribosome-recycling factor</fullName>
        <shortName evidence="1">RRF</shortName>
    </recommendedName>
    <alternativeName>
        <fullName evidence="1">Ribosome-releasing factor</fullName>
    </alternativeName>
</protein>
<accession>A7NQW5</accession>
<sequence length="185" mass="21098">MVNDVLREAESRMKKATEALRNHLATIRTGRASPALVEHLHVEAYGATLPLNQLATITVPEPRMLVIQPFDANTVKAISKAIMNSELGITPTDDGRLIRLAIPQLTEARRKELTKLVRARVEESKVALRNIRREALEDLRDLEHEKMISEDEHRRAQEKLQELTDRYVRELDHIGATKEAEVMEI</sequence>
<name>RRF_ROSCS</name>